<name>Y799_RICFE</name>
<organism>
    <name type="scientific">Rickettsia felis (strain ATCC VR-1525 / URRWXCal2)</name>
    <name type="common">Rickettsia azadi</name>
    <dbReference type="NCBI Taxonomy" id="315456"/>
    <lineage>
        <taxon>Bacteria</taxon>
        <taxon>Pseudomonadati</taxon>
        <taxon>Pseudomonadota</taxon>
        <taxon>Alphaproteobacteria</taxon>
        <taxon>Rickettsiales</taxon>
        <taxon>Rickettsiaceae</taxon>
        <taxon>Rickettsieae</taxon>
        <taxon>Rickettsia</taxon>
        <taxon>spotted fever group</taxon>
    </lineage>
</organism>
<dbReference type="EMBL" id="CP000053">
    <property type="protein sequence ID" value="AAY61650.1"/>
    <property type="molecule type" value="Genomic_DNA"/>
</dbReference>
<dbReference type="SMR" id="Q4ULC3"/>
<dbReference type="STRING" id="315456.RF_0799"/>
<dbReference type="KEGG" id="rfe:RF_0799"/>
<dbReference type="eggNOG" id="COG0217">
    <property type="taxonomic scope" value="Bacteria"/>
</dbReference>
<dbReference type="HOGENOM" id="CLU_062974_2_2_5"/>
<dbReference type="OrthoDB" id="9781053at2"/>
<dbReference type="Proteomes" id="UP000008548">
    <property type="component" value="Chromosome"/>
</dbReference>
<dbReference type="GO" id="GO:0005737">
    <property type="term" value="C:cytoplasm"/>
    <property type="evidence" value="ECO:0007669"/>
    <property type="project" value="UniProtKB-SubCell"/>
</dbReference>
<dbReference type="GO" id="GO:0003677">
    <property type="term" value="F:DNA binding"/>
    <property type="evidence" value="ECO:0007669"/>
    <property type="project" value="UniProtKB-UniRule"/>
</dbReference>
<dbReference type="GO" id="GO:0006355">
    <property type="term" value="P:regulation of DNA-templated transcription"/>
    <property type="evidence" value="ECO:0007669"/>
    <property type="project" value="UniProtKB-UniRule"/>
</dbReference>
<dbReference type="FunFam" id="1.10.10.200:FF:000002">
    <property type="entry name" value="Probable transcriptional regulatory protein CLM62_37755"/>
    <property type="match status" value="1"/>
</dbReference>
<dbReference type="Gene3D" id="1.10.10.200">
    <property type="match status" value="1"/>
</dbReference>
<dbReference type="Gene3D" id="3.30.70.980">
    <property type="match status" value="2"/>
</dbReference>
<dbReference type="HAMAP" id="MF_00693">
    <property type="entry name" value="Transcrip_reg_TACO1"/>
    <property type="match status" value="1"/>
</dbReference>
<dbReference type="InterPro" id="IPR017856">
    <property type="entry name" value="Integrase-like_N"/>
</dbReference>
<dbReference type="InterPro" id="IPR048300">
    <property type="entry name" value="TACO1_YebC-like_2nd/3rd_dom"/>
</dbReference>
<dbReference type="InterPro" id="IPR049083">
    <property type="entry name" value="TACO1_YebC_N"/>
</dbReference>
<dbReference type="InterPro" id="IPR002876">
    <property type="entry name" value="Transcrip_reg_TACO1-like"/>
</dbReference>
<dbReference type="InterPro" id="IPR026564">
    <property type="entry name" value="Transcrip_reg_TACO1-like_dom3"/>
</dbReference>
<dbReference type="InterPro" id="IPR029072">
    <property type="entry name" value="YebC-like"/>
</dbReference>
<dbReference type="NCBIfam" id="NF001030">
    <property type="entry name" value="PRK00110.1"/>
    <property type="match status" value="1"/>
</dbReference>
<dbReference type="NCBIfam" id="NF009044">
    <property type="entry name" value="PRK12378.1"/>
    <property type="match status" value="1"/>
</dbReference>
<dbReference type="NCBIfam" id="TIGR01033">
    <property type="entry name" value="YebC/PmpR family DNA-binding transcriptional regulator"/>
    <property type="match status" value="1"/>
</dbReference>
<dbReference type="PANTHER" id="PTHR12532:SF11">
    <property type="match status" value="1"/>
</dbReference>
<dbReference type="PANTHER" id="PTHR12532">
    <property type="entry name" value="TRANSLATIONAL ACTIVATOR OF CYTOCHROME C OXIDASE 1"/>
    <property type="match status" value="1"/>
</dbReference>
<dbReference type="Pfam" id="PF20772">
    <property type="entry name" value="TACO1_YebC_N"/>
    <property type="match status" value="1"/>
</dbReference>
<dbReference type="Pfam" id="PF01709">
    <property type="entry name" value="Transcrip_reg"/>
    <property type="match status" value="1"/>
</dbReference>
<dbReference type="SUPFAM" id="SSF75625">
    <property type="entry name" value="YebC-like"/>
    <property type="match status" value="1"/>
</dbReference>
<protein>
    <recommendedName>
        <fullName evidence="1">Probable transcriptional regulatory protein RF_0799</fullName>
    </recommendedName>
</protein>
<feature type="chain" id="PRO_0000257121" description="Probable transcriptional regulatory protein RF_0799">
    <location>
        <begin position="1"/>
        <end position="252"/>
    </location>
</feature>
<feature type="region of interest" description="Disordered" evidence="2">
    <location>
        <begin position="1"/>
        <end position="21"/>
    </location>
</feature>
<evidence type="ECO:0000255" key="1">
    <source>
        <dbReference type="HAMAP-Rule" id="MF_00693"/>
    </source>
</evidence>
<evidence type="ECO:0000256" key="2">
    <source>
        <dbReference type="SAM" id="MobiDB-lite"/>
    </source>
</evidence>
<proteinExistence type="inferred from homology"/>
<gene>
    <name type="ordered locus">RF_0799</name>
</gene>
<accession>Q4ULC3</accession>
<sequence>MAGHSKFKNIQHRKGAQDKKRAKVFTKLIREIVTAVKTGSSNIPENNPRLRNALTAARSQNLPKERIDKAINSADDANTENYTEIRYEGYAPNGIAIIVEALTDNKNRTAAEVRSGFTKYGGSLGETGSVNYLFKHCGVIQYPTNIASNEDIFEAAIEAGGDDIVSDEIFHTIYTDIENFSKVLEFLTGKYGIPEDSYIGWIPLNTIIIDDKEKAEKLLKLVEILEESDDVQRVFGNYELSDDVYEIIQGEE</sequence>
<keyword id="KW-0963">Cytoplasm</keyword>
<keyword id="KW-0238">DNA-binding</keyword>
<keyword id="KW-0804">Transcription</keyword>
<keyword id="KW-0805">Transcription regulation</keyword>
<reference key="1">
    <citation type="journal article" date="2005" name="PLoS Biol.">
        <title>The genome sequence of Rickettsia felis identifies the first putative conjugative plasmid in an obligate intracellular parasite.</title>
        <authorList>
            <person name="Ogata H."/>
            <person name="Renesto P."/>
            <person name="Audic S."/>
            <person name="Robert C."/>
            <person name="Blanc G."/>
            <person name="Fournier P.-E."/>
            <person name="Parinello H."/>
            <person name="Claverie J.-M."/>
            <person name="Raoult D."/>
        </authorList>
    </citation>
    <scope>NUCLEOTIDE SEQUENCE [LARGE SCALE GENOMIC DNA]</scope>
    <source>
        <strain>ATCC VR-1525 / URRWXCal2</strain>
    </source>
</reference>
<comment type="subcellular location">
    <subcellularLocation>
        <location evidence="1">Cytoplasm</location>
    </subcellularLocation>
</comment>
<comment type="similarity">
    <text evidence="1">Belongs to the TACO1 family.</text>
</comment>